<protein>
    <recommendedName>
        <fullName evidence="1">Protein pelota homolog</fullName>
        <ecNumber evidence="1">3.1.-.-</ecNumber>
    </recommendedName>
</protein>
<comment type="function">
    <text evidence="1">May function in recognizing stalled ribosomes, interact with stem-loop structures in stalled mRNA molecules, and effect endonucleolytic cleavage of the mRNA. May play a role in the release non-functional ribosomes and degradation of damaged mRNAs. Has endoribonuclease activity.</text>
</comment>
<comment type="cofactor">
    <cofactor evidence="1">
        <name>a divalent metal cation</name>
        <dbReference type="ChEBI" id="CHEBI:60240"/>
    </cofactor>
</comment>
<comment type="subunit">
    <text evidence="1">Monomer.</text>
</comment>
<comment type="subcellular location">
    <subcellularLocation>
        <location evidence="1">Cytoplasm</location>
    </subcellularLocation>
</comment>
<comment type="domain">
    <text evidence="1">The N-terminal domain has the RNA-binding Sm fold. It harbors the endoribonuclease activity.</text>
</comment>
<comment type="similarity">
    <text evidence="1">Belongs to the eukaryotic release factor 1 family. Pelota subfamily.</text>
</comment>
<accession>Q9V0V3</accession>
<accession>G8ZJE9</accession>
<sequence length="356" mass="40470">MEVLEEKPKEGKVKLKVETLDDLWHLYHVISPGDIVYAKTLRKQAQRSDSLRPEKVEAIPVFLGVRAEKINLHRFANQLRVTGPIVYASRDDVPLGKYHTIAVEPGMTITIQKERWRSHHVERIKEAVEASKRAKVMIVAMEDGEAEVAIVREYGLDFIASIRHNIGGKRYNVKREDEEKKFFHDVAKTIKDLIERENVQKVIVAGPGFYKENFYGFLRENYPELAGKVVLDDTSMGGRVGVYEVIKRGTVDKVYTETRVAQEIKLVEKVIERIAKDEPVAYGLKDVEEAVNYGAVDTLLVLDELLKGDDRERIEEIMEMARNLRANVVVVSSEHEGGDKLKALGGIAAILRFKIH</sequence>
<gene>
    <name evidence="1" type="primary">pelA</name>
    <name type="ordered locus">PYRAB06870</name>
    <name type="ORF">PAB0468</name>
</gene>
<feature type="chain" id="PRO_0000361817" description="Protein pelota homolog">
    <location>
        <begin position="1"/>
        <end position="356"/>
    </location>
</feature>
<proteinExistence type="inferred from homology"/>
<organism>
    <name type="scientific">Pyrococcus abyssi (strain GE5 / Orsay)</name>
    <dbReference type="NCBI Taxonomy" id="272844"/>
    <lineage>
        <taxon>Archaea</taxon>
        <taxon>Methanobacteriati</taxon>
        <taxon>Methanobacteriota</taxon>
        <taxon>Thermococci</taxon>
        <taxon>Thermococcales</taxon>
        <taxon>Thermococcaceae</taxon>
        <taxon>Pyrococcus</taxon>
    </lineage>
</organism>
<keyword id="KW-0963">Cytoplasm</keyword>
<keyword id="KW-0255">Endonuclease</keyword>
<keyword id="KW-0378">Hydrolase</keyword>
<keyword id="KW-0479">Metal-binding</keyword>
<keyword id="KW-0540">Nuclease</keyword>
<dbReference type="EC" id="3.1.-.-" evidence="1"/>
<dbReference type="EMBL" id="AJ248285">
    <property type="protein sequence ID" value="CAB49600.1"/>
    <property type="molecule type" value="Genomic_DNA"/>
</dbReference>
<dbReference type="EMBL" id="HE613800">
    <property type="protein sequence ID" value="CCE70076.1"/>
    <property type="molecule type" value="Genomic_DNA"/>
</dbReference>
<dbReference type="PIR" id="G75110">
    <property type="entry name" value="G75110"/>
</dbReference>
<dbReference type="RefSeq" id="WP_010867805.1">
    <property type="nucleotide sequence ID" value="NC_000868.1"/>
</dbReference>
<dbReference type="SMR" id="Q9V0V3"/>
<dbReference type="STRING" id="272844.PAB0468"/>
<dbReference type="KEGG" id="pab:PAB0468"/>
<dbReference type="PATRIC" id="fig|272844.11.peg.721"/>
<dbReference type="eggNOG" id="arCOG01741">
    <property type="taxonomic scope" value="Archaea"/>
</dbReference>
<dbReference type="HOGENOM" id="CLU_023334_0_0_2"/>
<dbReference type="OrthoDB" id="31300at2157"/>
<dbReference type="PhylomeDB" id="Q9V0V3"/>
<dbReference type="Proteomes" id="UP000000810">
    <property type="component" value="Chromosome"/>
</dbReference>
<dbReference type="Proteomes" id="UP000009139">
    <property type="component" value="Chromosome"/>
</dbReference>
<dbReference type="GO" id="GO:0005737">
    <property type="term" value="C:cytoplasm"/>
    <property type="evidence" value="ECO:0007669"/>
    <property type="project" value="UniProtKB-SubCell"/>
</dbReference>
<dbReference type="GO" id="GO:0004519">
    <property type="term" value="F:endonuclease activity"/>
    <property type="evidence" value="ECO:0007669"/>
    <property type="project" value="UniProtKB-UniRule"/>
</dbReference>
<dbReference type="GO" id="GO:0046872">
    <property type="term" value="F:metal ion binding"/>
    <property type="evidence" value="ECO:0007669"/>
    <property type="project" value="UniProtKB-UniRule"/>
</dbReference>
<dbReference type="GO" id="GO:0070651">
    <property type="term" value="P:nonfunctional rRNA decay"/>
    <property type="evidence" value="ECO:0007669"/>
    <property type="project" value="TreeGrafter"/>
</dbReference>
<dbReference type="GO" id="GO:0070966">
    <property type="term" value="P:nuclear-transcribed mRNA catabolic process, no-go decay"/>
    <property type="evidence" value="ECO:0007669"/>
    <property type="project" value="InterPro"/>
</dbReference>
<dbReference type="GO" id="GO:0070481">
    <property type="term" value="P:nuclear-transcribed mRNA catabolic process, non-stop decay"/>
    <property type="evidence" value="ECO:0007669"/>
    <property type="project" value="InterPro"/>
</dbReference>
<dbReference type="GO" id="GO:0032790">
    <property type="term" value="P:ribosome disassembly"/>
    <property type="evidence" value="ECO:0007669"/>
    <property type="project" value="TreeGrafter"/>
</dbReference>
<dbReference type="GO" id="GO:0071025">
    <property type="term" value="P:RNA surveillance"/>
    <property type="evidence" value="ECO:0007669"/>
    <property type="project" value="InterPro"/>
</dbReference>
<dbReference type="FunFam" id="2.30.30.870:FF:000002">
    <property type="entry name" value="Protein pelota homolog"/>
    <property type="match status" value="1"/>
</dbReference>
<dbReference type="Gene3D" id="3.30.1330.30">
    <property type="match status" value="1"/>
</dbReference>
<dbReference type="Gene3D" id="3.30.420.60">
    <property type="entry name" value="eRF1 domain 2"/>
    <property type="match status" value="1"/>
</dbReference>
<dbReference type="Gene3D" id="2.30.30.870">
    <property type="entry name" value="Pelota, domain A"/>
    <property type="match status" value="1"/>
</dbReference>
<dbReference type="HAMAP" id="MF_01853">
    <property type="entry name" value="PelO"/>
    <property type="match status" value="1"/>
</dbReference>
<dbReference type="InterPro" id="IPR042226">
    <property type="entry name" value="eFR1_2_sf"/>
</dbReference>
<dbReference type="InterPro" id="IPR005140">
    <property type="entry name" value="eRF1_1_Pelota"/>
</dbReference>
<dbReference type="InterPro" id="IPR005141">
    <property type="entry name" value="eRF1_2"/>
</dbReference>
<dbReference type="InterPro" id="IPR005142">
    <property type="entry name" value="eRF1_3"/>
</dbReference>
<dbReference type="InterPro" id="IPR038069">
    <property type="entry name" value="Pelota/DOM34_N"/>
</dbReference>
<dbReference type="InterPro" id="IPR023521">
    <property type="entry name" value="Pelota_arc"/>
</dbReference>
<dbReference type="InterPro" id="IPR029064">
    <property type="entry name" value="Ribosomal_eL30-like_sf"/>
</dbReference>
<dbReference type="InterPro" id="IPR004405">
    <property type="entry name" value="Transl-rel_pelota"/>
</dbReference>
<dbReference type="NCBIfam" id="TIGR00111">
    <property type="entry name" value="pelota"/>
    <property type="match status" value="1"/>
</dbReference>
<dbReference type="PANTHER" id="PTHR10853">
    <property type="entry name" value="PELOTA"/>
    <property type="match status" value="1"/>
</dbReference>
<dbReference type="PANTHER" id="PTHR10853:SF0">
    <property type="entry name" value="PROTEIN PELOTA HOMOLOG"/>
    <property type="match status" value="1"/>
</dbReference>
<dbReference type="Pfam" id="PF03463">
    <property type="entry name" value="eRF1_1"/>
    <property type="match status" value="1"/>
</dbReference>
<dbReference type="Pfam" id="PF03464">
    <property type="entry name" value="eRF1_2"/>
    <property type="match status" value="1"/>
</dbReference>
<dbReference type="Pfam" id="PF03465">
    <property type="entry name" value="eRF1_3"/>
    <property type="match status" value="1"/>
</dbReference>
<dbReference type="SMART" id="SM01194">
    <property type="entry name" value="eRF1_1"/>
    <property type="match status" value="1"/>
</dbReference>
<dbReference type="SUPFAM" id="SSF159065">
    <property type="entry name" value="Dom34/Pelota N-terminal domain-like"/>
    <property type="match status" value="1"/>
</dbReference>
<dbReference type="SUPFAM" id="SSF55315">
    <property type="entry name" value="L30e-like"/>
    <property type="match status" value="1"/>
</dbReference>
<dbReference type="SUPFAM" id="SSF53137">
    <property type="entry name" value="Translational machinery components"/>
    <property type="match status" value="1"/>
</dbReference>
<name>PELO_PYRAB</name>
<evidence type="ECO:0000255" key="1">
    <source>
        <dbReference type="HAMAP-Rule" id="MF_01853"/>
    </source>
</evidence>
<reference key="1">
    <citation type="journal article" date="2003" name="Mol. Microbiol.">
        <title>An integrated analysis of the genome of the hyperthermophilic archaeon Pyrococcus abyssi.</title>
        <authorList>
            <person name="Cohen G.N."/>
            <person name="Barbe V."/>
            <person name="Flament D."/>
            <person name="Galperin M."/>
            <person name="Heilig R."/>
            <person name="Lecompte O."/>
            <person name="Poch O."/>
            <person name="Prieur D."/>
            <person name="Querellou J."/>
            <person name="Ripp R."/>
            <person name="Thierry J.-C."/>
            <person name="Van der Oost J."/>
            <person name="Weissenbach J."/>
            <person name="Zivanovic Y."/>
            <person name="Forterre P."/>
        </authorList>
    </citation>
    <scope>NUCLEOTIDE SEQUENCE [LARGE SCALE GENOMIC DNA]</scope>
    <source>
        <strain>GE5 / Orsay</strain>
    </source>
</reference>
<reference key="2">
    <citation type="journal article" date="2012" name="Curr. Microbiol.">
        <title>Re-annotation of two hyperthermophilic archaea Pyrococcus abyssi GE5 and Pyrococcus furiosus DSM 3638.</title>
        <authorList>
            <person name="Gao J."/>
            <person name="Wang J."/>
        </authorList>
    </citation>
    <scope>GENOME REANNOTATION</scope>
    <source>
        <strain>GE5 / Orsay</strain>
    </source>
</reference>